<name>GLO2_ORYSJ</name>
<gene>
    <name type="primary">GLO2</name>
    <name type="ordered locus">Os04g0623600</name>
    <name type="ordered locus">LOC_Os04g53214</name>
    <name type="ORF">OsJ_16218</name>
    <name type="ORF">OSJNBa0053K19.9</name>
</gene>
<dbReference type="EC" id="1.1.3.15" evidence="1"/>
<dbReference type="EMBL" id="AL606645">
    <property type="protein sequence ID" value="CAE03501.2"/>
    <property type="status" value="ALT_SEQ"/>
    <property type="molecule type" value="Genomic_DNA"/>
</dbReference>
<dbReference type="EMBL" id="AP014960">
    <property type="status" value="NOT_ANNOTATED_CDS"/>
    <property type="molecule type" value="Genomic_DNA"/>
</dbReference>
<dbReference type="EMBL" id="CM000141">
    <property type="protein sequence ID" value="EEE61717.1"/>
    <property type="status" value="ALT_SEQ"/>
    <property type="molecule type" value="Genomic_DNA"/>
</dbReference>
<dbReference type="SMR" id="Q7XPR4"/>
<dbReference type="FunCoup" id="Q7XPR4">
    <property type="interactions" value="810"/>
</dbReference>
<dbReference type="STRING" id="39947.Q7XPR4"/>
<dbReference type="PaxDb" id="39947-Q7XPR4"/>
<dbReference type="eggNOG" id="KOG0538">
    <property type="taxonomic scope" value="Eukaryota"/>
</dbReference>
<dbReference type="InParanoid" id="Q7XPR4"/>
<dbReference type="PlantReactome" id="R-OSA-1119312">
    <property type="pathway name" value="Photorespiration"/>
</dbReference>
<dbReference type="PlantReactome" id="R-OSA-1119596">
    <property type="pathway name" value="Glutamate biosynthesis I"/>
</dbReference>
<dbReference type="UniPathway" id="UPA00951">
    <property type="reaction ID" value="UER00912"/>
</dbReference>
<dbReference type="Proteomes" id="UP000000763">
    <property type="component" value="Chromosome 4"/>
</dbReference>
<dbReference type="Proteomes" id="UP000007752">
    <property type="component" value="Chromosome 4"/>
</dbReference>
<dbReference type="Proteomes" id="UP000059680">
    <property type="component" value="Chromosome 4"/>
</dbReference>
<dbReference type="GO" id="GO:0005777">
    <property type="term" value="C:peroxisome"/>
    <property type="evidence" value="ECO:0000250"/>
    <property type="project" value="UniProtKB"/>
</dbReference>
<dbReference type="GO" id="GO:0003973">
    <property type="term" value="F:(S)-2-hydroxy-acid oxidase activity"/>
    <property type="evidence" value="ECO:0000250"/>
    <property type="project" value="UniProtKB"/>
</dbReference>
<dbReference type="GO" id="GO:0010181">
    <property type="term" value="F:FMN binding"/>
    <property type="evidence" value="ECO:0007669"/>
    <property type="project" value="InterPro"/>
</dbReference>
<dbReference type="GO" id="GO:0009854">
    <property type="term" value="P:oxidative photosynthetic carbon pathway"/>
    <property type="evidence" value="ECO:0007669"/>
    <property type="project" value="UniProtKB-KW"/>
</dbReference>
<dbReference type="GO" id="GO:0009853">
    <property type="term" value="P:photorespiration"/>
    <property type="evidence" value="ECO:0000250"/>
    <property type="project" value="UniProtKB"/>
</dbReference>
<dbReference type="GO" id="GO:0010109">
    <property type="term" value="P:regulation of photosynthesis"/>
    <property type="evidence" value="ECO:0000250"/>
    <property type="project" value="UniProtKB"/>
</dbReference>
<dbReference type="GO" id="GO:0051707">
    <property type="term" value="P:response to other organism"/>
    <property type="evidence" value="ECO:0007669"/>
    <property type="project" value="UniProtKB-ARBA"/>
</dbReference>
<dbReference type="GO" id="GO:0046718">
    <property type="term" value="P:symbiont entry into host cell"/>
    <property type="evidence" value="ECO:0000250"/>
    <property type="project" value="UniProtKB"/>
</dbReference>
<dbReference type="CDD" id="cd02809">
    <property type="entry name" value="alpha_hydroxyacid_oxid_FMN"/>
    <property type="match status" value="1"/>
</dbReference>
<dbReference type="FunFam" id="3.20.20.70:FF:000204">
    <property type="entry name" value="Peroxisomal (S)-2-hydroxy-acid oxidase GLO4"/>
    <property type="match status" value="1"/>
</dbReference>
<dbReference type="Gene3D" id="3.20.20.70">
    <property type="entry name" value="Aldolase class I"/>
    <property type="match status" value="1"/>
</dbReference>
<dbReference type="InterPro" id="IPR013785">
    <property type="entry name" value="Aldolase_TIM"/>
</dbReference>
<dbReference type="InterPro" id="IPR012133">
    <property type="entry name" value="Alpha-hydoxy_acid_DH_FMN"/>
</dbReference>
<dbReference type="InterPro" id="IPR000262">
    <property type="entry name" value="FMN-dep_DH"/>
</dbReference>
<dbReference type="InterPro" id="IPR037396">
    <property type="entry name" value="FMN_HAD"/>
</dbReference>
<dbReference type="InterPro" id="IPR008259">
    <property type="entry name" value="FMN_hydac_DH_AS"/>
</dbReference>
<dbReference type="PANTHER" id="PTHR10578:SF72">
    <property type="entry name" value="GLYCOLATE OXIDASE 2"/>
    <property type="match status" value="1"/>
</dbReference>
<dbReference type="PANTHER" id="PTHR10578">
    <property type="entry name" value="S -2-HYDROXY-ACID OXIDASE-RELATED"/>
    <property type="match status" value="1"/>
</dbReference>
<dbReference type="Pfam" id="PF01070">
    <property type="entry name" value="FMN_dh"/>
    <property type="match status" value="1"/>
</dbReference>
<dbReference type="PIRSF" id="PIRSF000138">
    <property type="entry name" value="Al-hdrx_acd_dh"/>
    <property type="match status" value="1"/>
</dbReference>
<dbReference type="SUPFAM" id="SSF51395">
    <property type="entry name" value="FMN-linked oxidoreductases"/>
    <property type="match status" value="1"/>
</dbReference>
<dbReference type="PROSITE" id="PS00557">
    <property type="entry name" value="FMN_HYDROXY_ACID_DH_1"/>
    <property type="match status" value="1"/>
</dbReference>
<dbReference type="PROSITE" id="PS51349">
    <property type="entry name" value="FMN_HYDROXY_ACID_DH_2"/>
    <property type="match status" value="1"/>
</dbReference>
<feature type="chain" id="PRO_0000403411" description="Glycolate oxidase 2">
    <location>
        <begin position="1"/>
        <end position="368"/>
    </location>
</feature>
<feature type="domain" description="FMN hydroxy acid dehydrogenase" evidence="4">
    <location>
        <begin position="1"/>
        <end position="360"/>
    </location>
</feature>
<feature type="short sequence motif" description="Microbody targeting signal" evidence="3">
    <location>
        <begin position="366"/>
        <end position="368"/>
    </location>
</feature>
<feature type="active site" description="Proton acceptor" evidence="1">
    <location>
        <position position="255"/>
    </location>
</feature>
<feature type="binding site" evidence="1">
    <location>
        <begin position="78"/>
        <end position="80"/>
    </location>
    <ligand>
        <name>FMN</name>
        <dbReference type="ChEBI" id="CHEBI:58210"/>
    </ligand>
</feature>
<feature type="binding site" evidence="1">
    <location>
        <position position="107"/>
    </location>
    <ligand>
        <name>FMN</name>
        <dbReference type="ChEBI" id="CHEBI:58210"/>
    </ligand>
</feature>
<feature type="binding site" evidence="1">
    <location>
        <begin position="128"/>
        <end position="130"/>
    </location>
    <ligand>
        <name>FMN</name>
        <dbReference type="ChEBI" id="CHEBI:58210"/>
    </ligand>
</feature>
<feature type="binding site" evidence="1">
    <location>
        <position position="156"/>
    </location>
    <ligand>
        <name>FMN</name>
        <dbReference type="ChEBI" id="CHEBI:58210"/>
    </ligand>
</feature>
<feature type="binding site" evidence="2">
    <location>
        <position position="165"/>
    </location>
    <ligand>
        <name>glyoxylate</name>
        <dbReference type="ChEBI" id="CHEBI:36655"/>
    </ligand>
</feature>
<feature type="binding site" evidence="1">
    <location>
        <position position="231"/>
    </location>
    <ligand>
        <name>FMN</name>
        <dbReference type="ChEBI" id="CHEBI:58210"/>
    </ligand>
</feature>
<feature type="binding site" evidence="1">
    <location>
        <position position="253"/>
    </location>
    <ligand>
        <name>FMN</name>
        <dbReference type="ChEBI" id="CHEBI:58210"/>
    </ligand>
</feature>
<feature type="binding site" evidence="2">
    <location>
        <position position="255"/>
    </location>
    <ligand>
        <name>glyoxylate</name>
        <dbReference type="ChEBI" id="CHEBI:36655"/>
    </ligand>
</feature>
<feature type="binding site" evidence="2">
    <location>
        <position position="258"/>
    </location>
    <ligand>
        <name>glyoxylate</name>
        <dbReference type="ChEBI" id="CHEBI:36655"/>
    </ligand>
</feature>
<feature type="binding site" evidence="1">
    <location>
        <begin position="286"/>
        <end position="290"/>
    </location>
    <ligand>
        <name>FMN</name>
        <dbReference type="ChEBI" id="CHEBI:58210"/>
    </ligand>
</feature>
<feature type="binding site" evidence="1">
    <location>
        <begin position="309"/>
        <end position="310"/>
    </location>
    <ligand>
        <name>FMN</name>
        <dbReference type="ChEBI" id="CHEBI:58210"/>
    </ligand>
</feature>
<feature type="site" description="Involved in determining the substrate specificity of glycolate oxidase" evidence="1">
    <location>
        <position position="109"/>
    </location>
</feature>
<keyword id="KW-0285">Flavoprotein</keyword>
<keyword id="KW-0288">FMN</keyword>
<keyword id="KW-0323">Glycolate pathway</keyword>
<keyword id="KW-0560">Oxidoreductase</keyword>
<keyword id="KW-0576">Peroxisome</keyword>
<keyword id="KW-0601">Photorespiration</keyword>
<keyword id="KW-1185">Reference proteome</keyword>
<protein>
    <recommendedName>
        <fullName>Glycolate oxidase 2</fullName>
        <shortName>GOX 2</shortName>
        <shortName>OsGLO2</shortName>
        <ecNumber evidence="1">1.1.3.15</ecNumber>
    </recommendedName>
    <alternativeName>
        <fullName>Peroxisomal (S)-2-hydroxy-acid oxidase GLO2</fullName>
    </alternativeName>
    <alternativeName>
        <fullName>Short chain alpha-hydroxy acid oxidase GLO2</fullName>
    </alternativeName>
</protein>
<sequence>MALVTNVCEYEELAKHKLPKMVYDFYAVDAEDQWTLRENSEAFSRILFQPVVLVDVSCIDMSMSVLGYNISMPIMIAPTALHKLAHPEGELATARAAAAAETIMTLSSWSSCSIEEVNLAGPGVRFFQLSIYKDRNLVQQLIQRAEKAGYKAIVLTVDAPWLGRREADVKNRFTLPQNVMLKIFEGLDQGKIDETNGSGLAAYVASQIDRSFSWKDIKWLQTVTSLPVLVKGIITAQDTRIAIEYGAAGIIMSNHGGRQLDYLPATISCLEEVVREANGRVPVFIDSGFRRGTDVFKALALGASGVFIGRPVLFSLAIDGEAGVRNALRMLRDELEITMALSGCTSVKEITRGHVVTESDRIRRCSRL</sequence>
<organism>
    <name type="scientific">Oryza sativa subsp. japonica</name>
    <name type="common">Rice</name>
    <dbReference type="NCBI Taxonomy" id="39947"/>
    <lineage>
        <taxon>Eukaryota</taxon>
        <taxon>Viridiplantae</taxon>
        <taxon>Streptophyta</taxon>
        <taxon>Embryophyta</taxon>
        <taxon>Tracheophyta</taxon>
        <taxon>Spermatophyta</taxon>
        <taxon>Magnoliopsida</taxon>
        <taxon>Liliopsida</taxon>
        <taxon>Poales</taxon>
        <taxon>Poaceae</taxon>
        <taxon>BOP clade</taxon>
        <taxon>Oryzoideae</taxon>
        <taxon>Oryzeae</taxon>
        <taxon>Oryzinae</taxon>
        <taxon>Oryza</taxon>
        <taxon>Oryza sativa</taxon>
    </lineage>
</organism>
<reference key="1">
    <citation type="journal article" date="2002" name="Nature">
        <title>Sequence and analysis of rice chromosome 4.</title>
        <authorList>
            <person name="Feng Q."/>
            <person name="Zhang Y."/>
            <person name="Hao P."/>
            <person name="Wang S."/>
            <person name="Fu G."/>
            <person name="Huang Y."/>
            <person name="Li Y."/>
            <person name="Zhu J."/>
            <person name="Liu Y."/>
            <person name="Hu X."/>
            <person name="Jia P."/>
            <person name="Zhang Y."/>
            <person name="Zhao Q."/>
            <person name="Ying K."/>
            <person name="Yu S."/>
            <person name="Tang Y."/>
            <person name="Weng Q."/>
            <person name="Zhang L."/>
            <person name="Lu Y."/>
            <person name="Mu J."/>
            <person name="Lu Y."/>
            <person name="Zhang L.S."/>
            <person name="Yu Z."/>
            <person name="Fan D."/>
            <person name="Liu X."/>
            <person name="Lu T."/>
            <person name="Li C."/>
            <person name="Wu Y."/>
            <person name="Sun T."/>
            <person name="Lei H."/>
            <person name="Li T."/>
            <person name="Hu H."/>
            <person name="Guan J."/>
            <person name="Wu M."/>
            <person name="Zhang R."/>
            <person name="Zhou B."/>
            <person name="Chen Z."/>
            <person name="Chen L."/>
            <person name="Jin Z."/>
            <person name="Wang R."/>
            <person name="Yin H."/>
            <person name="Cai Z."/>
            <person name="Ren S."/>
            <person name="Lv G."/>
            <person name="Gu W."/>
            <person name="Zhu G."/>
            <person name="Tu Y."/>
            <person name="Jia J."/>
            <person name="Zhang Y."/>
            <person name="Chen J."/>
            <person name="Kang H."/>
            <person name="Chen X."/>
            <person name="Shao C."/>
            <person name="Sun Y."/>
            <person name="Hu Q."/>
            <person name="Zhang X."/>
            <person name="Zhang W."/>
            <person name="Wang L."/>
            <person name="Ding C."/>
            <person name="Sheng H."/>
            <person name="Gu J."/>
            <person name="Chen S."/>
            <person name="Ni L."/>
            <person name="Zhu F."/>
            <person name="Chen W."/>
            <person name="Lan L."/>
            <person name="Lai Y."/>
            <person name="Cheng Z."/>
            <person name="Gu M."/>
            <person name="Jiang J."/>
            <person name="Li J."/>
            <person name="Hong G."/>
            <person name="Xue Y."/>
            <person name="Han B."/>
        </authorList>
    </citation>
    <scope>NUCLEOTIDE SEQUENCE [LARGE SCALE GENOMIC DNA]</scope>
    <source>
        <strain>cv. Nipponbare</strain>
    </source>
</reference>
<reference key="2">
    <citation type="journal article" date="2005" name="Nature">
        <title>The map-based sequence of the rice genome.</title>
        <authorList>
            <consortium name="International rice genome sequencing project (IRGSP)"/>
        </authorList>
    </citation>
    <scope>NUCLEOTIDE SEQUENCE [LARGE SCALE GENOMIC DNA]</scope>
    <source>
        <strain>cv. Nipponbare</strain>
    </source>
</reference>
<reference key="3">
    <citation type="journal article" date="2013" name="Rice">
        <title>Improvement of the Oryza sativa Nipponbare reference genome using next generation sequence and optical map data.</title>
        <authorList>
            <person name="Kawahara Y."/>
            <person name="de la Bastide M."/>
            <person name="Hamilton J.P."/>
            <person name="Kanamori H."/>
            <person name="McCombie W.R."/>
            <person name="Ouyang S."/>
            <person name="Schwartz D.C."/>
            <person name="Tanaka T."/>
            <person name="Wu J."/>
            <person name="Zhou S."/>
            <person name="Childs K.L."/>
            <person name="Davidson R.M."/>
            <person name="Lin H."/>
            <person name="Quesada-Ocampo L."/>
            <person name="Vaillancourt B."/>
            <person name="Sakai H."/>
            <person name="Lee S.S."/>
            <person name="Kim J."/>
            <person name="Numa H."/>
            <person name="Itoh T."/>
            <person name="Buell C.R."/>
            <person name="Matsumoto T."/>
        </authorList>
    </citation>
    <scope>GENOME REANNOTATION</scope>
    <source>
        <strain>cv. Nipponbare</strain>
    </source>
</reference>
<reference key="4">
    <citation type="journal article" date="2005" name="PLoS Biol.">
        <title>The genomes of Oryza sativa: a history of duplications.</title>
        <authorList>
            <person name="Yu J."/>
            <person name="Wang J."/>
            <person name="Lin W."/>
            <person name="Li S."/>
            <person name="Li H."/>
            <person name="Zhou J."/>
            <person name="Ni P."/>
            <person name="Dong W."/>
            <person name="Hu S."/>
            <person name="Zeng C."/>
            <person name="Zhang J."/>
            <person name="Zhang Y."/>
            <person name="Li R."/>
            <person name="Xu Z."/>
            <person name="Li S."/>
            <person name="Li X."/>
            <person name="Zheng H."/>
            <person name="Cong L."/>
            <person name="Lin L."/>
            <person name="Yin J."/>
            <person name="Geng J."/>
            <person name="Li G."/>
            <person name="Shi J."/>
            <person name="Liu J."/>
            <person name="Lv H."/>
            <person name="Li J."/>
            <person name="Wang J."/>
            <person name="Deng Y."/>
            <person name="Ran L."/>
            <person name="Shi X."/>
            <person name="Wang X."/>
            <person name="Wu Q."/>
            <person name="Li C."/>
            <person name="Ren X."/>
            <person name="Wang J."/>
            <person name="Wang X."/>
            <person name="Li D."/>
            <person name="Liu D."/>
            <person name="Zhang X."/>
            <person name="Ji Z."/>
            <person name="Zhao W."/>
            <person name="Sun Y."/>
            <person name="Zhang Z."/>
            <person name="Bao J."/>
            <person name="Han Y."/>
            <person name="Dong L."/>
            <person name="Ji J."/>
            <person name="Chen P."/>
            <person name="Wu S."/>
            <person name="Liu J."/>
            <person name="Xiao Y."/>
            <person name="Bu D."/>
            <person name="Tan J."/>
            <person name="Yang L."/>
            <person name="Ye C."/>
            <person name="Zhang J."/>
            <person name="Xu J."/>
            <person name="Zhou Y."/>
            <person name="Yu Y."/>
            <person name="Zhang B."/>
            <person name="Zhuang S."/>
            <person name="Wei H."/>
            <person name="Liu B."/>
            <person name="Lei M."/>
            <person name="Yu H."/>
            <person name="Li Y."/>
            <person name="Xu H."/>
            <person name="Wei S."/>
            <person name="He X."/>
            <person name="Fang L."/>
            <person name="Zhang Z."/>
            <person name="Zhang Y."/>
            <person name="Huang X."/>
            <person name="Su Z."/>
            <person name="Tong W."/>
            <person name="Li J."/>
            <person name="Tong Z."/>
            <person name="Li S."/>
            <person name="Ye J."/>
            <person name="Wang L."/>
            <person name="Fang L."/>
            <person name="Lei T."/>
            <person name="Chen C.-S."/>
            <person name="Chen H.-C."/>
            <person name="Xu Z."/>
            <person name="Li H."/>
            <person name="Huang H."/>
            <person name="Zhang F."/>
            <person name="Xu H."/>
            <person name="Li N."/>
            <person name="Zhao C."/>
            <person name="Li S."/>
            <person name="Dong L."/>
            <person name="Huang Y."/>
            <person name="Li L."/>
            <person name="Xi Y."/>
            <person name="Qi Q."/>
            <person name="Li W."/>
            <person name="Zhang B."/>
            <person name="Hu W."/>
            <person name="Zhang Y."/>
            <person name="Tian X."/>
            <person name="Jiao Y."/>
            <person name="Liang X."/>
            <person name="Jin J."/>
            <person name="Gao L."/>
            <person name="Zheng W."/>
            <person name="Hao B."/>
            <person name="Liu S.-M."/>
            <person name="Wang W."/>
            <person name="Yuan L."/>
            <person name="Cao M."/>
            <person name="McDermott J."/>
            <person name="Samudrala R."/>
            <person name="Wang J."/>
            <person name="Wong G.K.-S."/>
            <person name="Yang H."/>
        </authorList>
    </citation>
    <scope>NUCLEOTIDE SEQUENCE [LARGE SCALE GENOMIC DNA]</scope>
    <source>
        <strain>cv. Nipponbare</strain>
    </source>
</reference>
<reference key="5">
    <citation type="journal article" date="2009" name="J. Exp. Bot.">
        <title>Inducible antisense suppression of glycolate oxidase reveals its strong regulation over photosynthesis in rice.</title>
        <authorList>
            <person name="Xu H.-W."/>
            <person name="Zhang J."/>
            <person name="Zeng J."/>
            <person name="Jiang L."/>
            <person name="Liu E."/>
            <person name="Peng C."/>
            <person name="He Z.-H."/>
            <person name="Peng X.-X."/>
        </authorList>
    </citation>
    <scope>GENE FAMILY</scope>
    <scope>NOMENCLATURE</scope>
</reference>
<proteinExistence type="inferred from homology"/>
<evidence type="ECO:0000250" key="1">
    <source>
        <dbReference type="UniProtKB" id="P05414"/>
    </source>
</evidence>
<evidence type="ECO:0000250" key="2">
    <source>
        <dbReference type="UniProtKB" id="Q9UJM8"/>
    </source>
</evidence>
<evidence type="ECO:0000255" key="3"/>
<evidence type="ECO:0000255" key="4">
    <source>
        <dbReference type="PROSITE-ProRule" id="PRU00683"/>
    </source>
</evidence>
<evidence type="ECO:0000305" key="5"/>
<accession>Q7XPR4</accession>
<accession>B9FCL2</accession>
<comment type="function">
    <text evidence="1">Catalyzes the oxidation of glycolate to glyoxylate, with a reduction of O2 to H2O2. Is a key enzyme in photorespiration in green plants.</text>
</comment>
<comment type="catalytic activity">
    <reaction evidence="1">
        <text>glycolate + O2 = glyoxylate + H2O2</text>
        <dbReference type="Rhea" id="RHEA:25311"/>
        <dbReference type="ChEBI" id="CHEBI:15379"/>
        <dbReference type="ChEBI" id="CHEBI:16240"/>
        <dbReference type="ChEBI" id="CHEBI:29805"/>
        <dbReference type="ChEBI" id="CHEBI:36655"/>
        <dbReference type="EC" id="1.1.3.15"/>
    </reaction>
    <physiologicalReaction direction="left-to-right" evidence="1">
        <dbReference type="Rhea" id="RHEA:25312"/>
    </physiologicalReaction>
</comment>
<comment type="cofactor">
    <cofactor evidence="1">
        <name>FMN</name>
        <dbReference type="ChEBI" id="CHEBI:58210"/>
    </cofactor>
    <text evidence="1">Binds 1 FMN per subunit.</text>
</comment>
<comment type="pathway">
    <text evidence="1">Photosynthesis; photorespiration; glycine from 2-phosphoglycolate: step 2/3.</text>
</comment>
<comment type="subunit">
    <text evidence="1">Homotetramer.</text>
</comment>
<comment type="subcellular location">
    <subcellularLocation>
        <location evidence="1">Peroxisome</location>
    </subcellularLocation>
</comment>
<comment type="similarity">
    <text evidence="4">Belongs to the FMN-dependent alpha-hydroxy acid dehydrogenase family.</text>
</comment>
<comment type="sequence caution" evidence="5">
    <conflict type="erroneous gene model prediction">
        <sequence resource="EMBL-CDS" id="CAE03501"/>
    </conflict>
</comment>
<comment type="sequence caution" evidence="5">
    <conflict type="erroneous gene model prediction">
        <sequence resource="EMBL-CDS" id="EEE61717"/>
    </conflict>
</comment>